<organism>
    <name type="scientific">Rattus norvegicus</name>
    <name type="common">Rat</name>
    <dbReference type="NCBI Taxonomy" id="10116"/>
    <lineage>
        <taxon>Eukaryota</taxon>
        <taxon>Metazoa</taxon>
        <taxon>Chordata</taxon>
        <taxon>Craniata</taxon>
        <taxon>Vertebrata</taxon>
        <taxon>Euteleostomi</taxon>
        <taxon>Mammalia</taxon>
        <taxon>Eutheria</taxon>
        <taxon>Euarchontoglires</taxon>
        <taxon>Glires</taxon>
        <taxon>Rodentia</taxon>
        <taxon>Myomorpha</taxon>
        <taxon>Muroidea</taxon>
        <taxon>Muridae</taxon>
        <taxon>Murinae</taxon>
        <taxon>Rattus</taxon>
    </lineage>
</organism>
<evidence type="ECO:0000250" key="1"/>
<evidence type="ECO:0000250" key="2">
    <source>
        <dbReference type="UniProtKB" id="Q15544"/>
    </source>
</evidence>
<evidence type="ECO:0000256" key="3">
    <source>
        <dbReference type="SAM" id="MobiDB-lite"/>
    </source>
</evidence>
<evidence type="ECO:0000305" key="4"/>
<reference key="1">
    <citation type="journal article" date="2004" name="Genome Res.">
        <title>The status, quality, and expansion of the NIH full-length cDNA project: the Mammalian Gene Collection (MGC).</title>
        <authorList>
            <consortium name="The MGC Project Team"/>
        </authorList>
    </citation>
    <scope>NUCLEOTIDE SEQUENCE [LARGE SCALE MRNA]</scope>
    <source>
        <tissue>Ovary</tissue>
    </source>
</reference>
<reference key="2">
    <citation type="journal article" date="2012" name="Nat. Commun.">
        <title>Quantitative maps of protein phosphorylation sites across 14 different rat organs and tissues.</title>
        <authorList>
            <person name="Lundby A."/>
            <person name="Secher A."/>
            <person name="Lage K."/>
            <person name="Nordsborg N.B."/>
            <person name="Dmytriyev A."/>
            <person name="Lundby C."/>
            <person name="Olsen J.V."/>
        </authorList>
    </citation>
    <scope>IDENTIFICATION BY MASS SPECTROMETRY [LARGE SCALE ANALYSIS]</scope>
</reference>
<protein>
    <recommendedName>
        <fullName>Transcription initiation factor TFIID subunit 11</fullName>
    </recommendedName>
    <alternativeName>
        <fullName>TFIID subunit p30-beta</fullName>
    </alternativeName>
    <alternativeName>
        <fullName>Transcription initiation factor TFIID 28 kDa subunit</fullName>
        <shortName>TAF(II)28</shortName>
        <shortName>TAFII-28</shortName>
        <shortName>TAFII28</shortName>
    </alternativeName>
</protein>
<proteinExistence type="evidence at protein level"/>
<comment type="function">
    <text evidence="2">The TFIID basal transcription factor complex plays a major role in the initiation of RNA polymerase II (Pol II)-dependent transcription. TFIID recognizes and binds promoters with or without a TATA box via its subunit TBP, a TATA-box-binding protein, and promotes assembly of the pre-initiation complex (PIC). The TFIID complex consists of TBP and TBP-associated factors (TAFs), including TAF1, TAF2, TAF3, TAF4, TAF5, TAF6, TAF7, TAF8, TAF9, TAF10, TAF11, TAF12 and TAF13. TAF11, together with TAF13 and TBP, play key roles during promoter binding by the TFIID and TFIIA transcription factor complexes.</text>
</comment>
<comment type="subunit">
    <text evidence="2">Component of the TFIID basal transcription factor complex, composed of TATA-box-binding protein TBP, and a number of TBP-associated factors (TAFs), including TAF1, TAF2, TAF3, TAF4, TAF5, TAF6, TAF7, TAF8, TAF9, TAF10, TAF11, TAF12 and TAF13. Interacts with TAF13 both in vitro and intracellularly; also interacts directly with TBP.</text>
</comment>
<comment type="subcellular location">
    <subcellularLocation>
        <location evidence="1">Nucleus</location>
    </subcellularLocation>
</comment>
<comment type="domain">
    <text evidence="1">TBP and TAFII18 bind to distinct domains of TAFII28.</text>
</comment>
<comment type="similarity">
    <text evidence="4">Belongs to the TAF11 family.</text>
</comment>
<gene>
    <name type="primary">Taf11</name>
</gene>
<sequence length="211" mass="23306">MDNLGESPTDKAGEPGESEETRATPGAPVSADTEGIPEETDQVGDADSKEAAAEESELKSQDVSDVTAAEREDPSLLTPAAKKLKLDTKDKKEKKQKVDEDEIQKMQILVSSFSEEQLNRYEMYRRSAFPKAAIKRLIQSITGTSVSQNVVIAMSGISKVFVGEVVEEALDVCEKWGEMPPLQPKHMREAVRRLKSKGQIPNSKHKKITFF</sequence>
<name>TAF11_RAT</name>
<feature type="chain" id="PRO_0000118905" description="Transcription initiation factor TFIID subunit 11">
    <location>
        <begin position="1"/>
        <end position="211"/>
    </location>
</feature>
<feature type="region of interest" description="Disordered" evidence="3">
    <location>
        <begin position="1"/>
        <end position="98"/>
    </location>
</feature>
<feature type="compositionally biased region" description="Basic and acidic residues" evidence="3">
    <location>
        <begin position="8"/>
        <end position="22"/>
    </location>
</feature>
<feature type="compositionally biased region" description="Acidic residues" evidence="3">
    <location>
        <begin position="35"/>
        <end position="44"/>
    </location>
</feature>
<feature type="compositionally biased region" description="Basic and acidic residues" evidence="3">
    <location>
        <begin position="46"/>
        <end position="74"/>
    </location>
</feature>
<feature type="compositionally biased region" description="Basic and acidic residues" evidence="3">
    <location>
        <begin position="84"/>
        <end position="98"/>
    </location>
</feature>
<feature type="modified residue" description="N-acetylmethionine" evidence="2">
    <location>
        <position position="1"/>
    </location>
</feature>
<accession>Q5U1X0</accession>
<dbReference type="EMBL" id="BC086421">
    <property type="protein sequence ID" value="AAH86421.1"/>
    <property type="molecule type" value="mRNA"/>
</dbReference>
<dbReference type="RefSeq" id="NP_001008351.1">
    <property type="nucleotide sequence ID" value="NM_001008350.1"/>
</dbReference>
<dbReference type="RefSeq" id="XP_006256253.1">
    <property type="nucleotide sequence ID" value="XM_006256191.3"/>
</dbReference>
<dbReference type="RefSeq" id="XP_006256254.1">
    <property type="nucleotide sequence ID" value="XM_006256192.3"/>
</dbReference>
<dbReference type="RefSeq" id="XP_008771034.1">
    <property type="nucleotide sequence ID" value="XM_008772812.2"/>
</dbReference>
<dbReference type="SMR" id="Q5U1X0"/>
<dbReference type="FunCoup" id="Q5U1X0">
    <property type="interactions" value="3519"/>
</dbReference>
<dbReference type="STRING" id="10116.ENSRNOP00000033634"/>
<dbReference type="PhosphoSitePlus" id="Q5U1X0"/>
<dbReference type="PaxDb" id="10116-ENSRNOP00000033634"/>
<dbReference type="Ensembl" id="ENSRNOT00000038195.3">
    <property type="protein sequence ID" value="ENSRNOP00000033634.2"/>
    <property type="gene ID" value="ENSRNOG00000024601.3"/>
</dbReference>
<dbReference type="GeneID" id="309638"/>
<dbReference type="KEGG" id="rno:309638"/>
<dbReference type="UCSC" id="RGD:1305626">
    <property type="organism name" value="rat"/>
</dbReference>
<dbReference type="AGR" id="RGD:1305626"/>
<dbReference type="CTD" id="6882"/>
<dbReference type="RGD" id="1305626">
    <property type="gene designation" value="Taf11"/>
</dbReference>
<dbReference type="eggNOG" id="KOG3219">
    <property type="taxonomic scope" value="Eukaryota"/>
</dbReference>
<dbReference type="GeneTree" id="ENSGT00390000013228"/>
<dbReference type="HOGENOM" id="CLU_088696_0_0_1"/>
<dbReference type="InParanoid" id="Q5U1X0"/>
<dbReference type="OMA" id="DITEMFI"/>
<dbReference type="OrthoDB" id="28335at2759"/>
<dbReference type="PhylomeDB" id="Q5U1X0"/>
<dbReference type="TreeFam" id="TF315132"/>
<dbReference type="Reactome" id="R-RNO-674695">
    <property type="pathway name" value="RNA Polymerase II Pre-transcription Events"/>
</dbReference>
<dbReference type="Reactome" id="R-RNO-6804756">
    <property type="pathway name" value="Regulation of TP53 Activity through Phosphorylation"/>
</dbReference>
<dbReference type="Reactome" id="R-RNO-6807505">
    <property type="pathway name" value="RNA polymerase II transcribes snRNA genes"/>
</dbReference>
<dbReference type="Reactome" id="R-RNO-73776">
    <property type="pathway name" value="RNA Polymerase II Promoter Escape"/>
</dbReference>
<dbReference type="Reactome" id="R-RNO-73779">
    <property type="pathway name" value="RNA Polymerase II Transcription Pre-Initiation And Promoter Opening"/>
</dbReference>
<dbReference type="Reactome" id="R-RNO-75953">
    <property type="pathway name" value="RNA Polymerase II Transcription Initiation"/>
</dbReference>
<dbReference type="Reactome" id="R-RNO-76042">
    <property type="pathway name" value="RNA Polymerase II Transcription Initiation And Promoter Clearance"/>
</dbReference>
<dbReference type="PRO" id="PR:Q5U1X0"/>
<dbReference type="Proteomes" id="UP000002494">
    <property type="component" value="Chromosome 20"/>
</dbReference>
<dbReference type="Bgee" id="ENSRNOG00000024601">
    <property type="expression patterns" value="Expressed in heart and 20 other cell types or tissues"/>
</dbReference>
<dbReference type="GO" id="GO:0005634">
    <property type="term" value="C:nucleus"/>
    <property type="evidence" value="ECO:0000266"/>
    <property type="project" value="RGD"/>
</dbReference>
<dbReference type="GO" id="GO:0005669">
    <property type="term" value="C:transcription factor TFIID complex"/>
    <property type="evidence" value="ECO:0000266"/>
    <property type="project" value="RGD"/>
</dbReference>
<dbReference type="GO" id="GO:0003677">
    <property type="term" value="F:DNA binding"/>
    <property type="evidence" value="ECO:0000266"/>
    <property type="project" value="RGD"/>
</dbReference>
<dbReference type="GO" id="GO:0046966">
    <property type="term" value="F:nuclear thyroid hormone receptor binding"/>
    <property type="evidence" value="ECO:0000266"/>
    <property type="project" value="RGD"/>
</dbReference>
<dbReference type="GO" id="GO:0042809">
    <property type="term" value="F:nuclear vitamin D receptor binding"/>
    <property type="evidence" value="ECO:0000266"/>
    <property type="project" value="RGD"/>
</dbReference>
<dbReference type="GO" id="GO:0046982">
    <property type="term" value="F:protein heterodimerization activity"/>
    <property type="evidence" value="ECO:0007669"/>
    <property type="project" value="InterPro"/>
</dbReference>
<dbReference type="GO" id="GO:0017025">
    <property type="term" value="F:TBP-class protein binding"/>
    <property type="evidence" value="ECO:0000266"/>
    <property type="project" value="RGD"/>
</dbReference>
<dbReference type="GO" id="GO:0003713">
    <property type="term" value="F:transcription coactivator activity"/>
    <property type="evidence" value="ECO:0000266"/>
    <property type="project" value="RGD"/>
</dbReference>
<dbReference type="GO" id="GO:0042789">
    <property type="term" value="P:mRNA transcription by RNA polymerase II"/>
    <property type="evidence" value="ECO:0000266"/>
    <property type="project" value="RGD"/>
</dbReference>
<dbReference type="GO" id="GO:0043923">
    <property type="term" value="P:positive regulation by host of viral transcription"/>
    <property type="evidence" value="ECO:0000266"/>
    <property type="project" value="RGD"/>
</dbReference>
<dbReference type="GO" id="GO:0060261">
    <property type="term" value="P:positive regulation of transcription initiation by RNA polymerase II"/>
    <property type="evidence" value="ECO:0000266"/>
    <property type="project" value="RGD"/>
</dbReference>
<dbReference type="GO" id="GO:0051123">
    <property type="term" value="P:RNA polymerase II preinitiation complex assembly"/>
    <property type="evidence" value="ECO:0000266"/>
    <property type="project" value="RGD"/>
</dbReference>
<dbReference type="CDD" id="cd08048">
    <property type="entry name" value="HFD_TAF11"/>
    <property type="match status" value="1"/>
</dbReference>
<dbReference type="FunFam" id="1.10.20.10:FF:000025">
    <property type="entry name" value="Transcription initiation factor TFIID subunit 11"/>
    <property type="match status" value="1"/>
</dbReference>
<dbReference type="Gene3D" id="1.10.20.10">
    <property type="entry name" value="Histone, subunit A"/>
    <property type="match status" value="1"/>
</dbReference>
<dbReference type="InterPro" id="IPR009072">
    <property type="entry name" value="Histone-fold"/>
</dbReference>
<dbReference type="InterPro" id="IPR045127">
    <property type="entry name" value="TAF11-like"/>
</dbReference>
<dbReference type="InterPro" id="IPR006809">
    <property type="entry name" value="TAFII28_dom"/>
</dbReference>
<dbReference type="PANTHER" id="PTHR13218:SF8">
    <property type="entry name" value="TRANSCRIPTION INITIATION FACTOR TFIID SUBUNIT 11"/>
    <property type="match status" value="1"/>
</dbReference>
<dbReference type="PANTHER" id="PTHR13218">
    <property type="entry name" value="TRANSCRIPTION INITIATION FACTOR TFIID SUBUNIT 11-RELATED"/>
    <property type="match status" value="1"/>
</dbReference>
<dbReference type="Pfam" id="PF04719">
    <property type="entry name" value="TAFII28"/>
    <property type="match status" value="1"/>
</dbReference>
<dbReference type="SUPFAM" id="SSF47113">
    <property type="entry name" value="Histone-fold"/>
    <property type="match status" value="1"/>
</dbReference>
<keyword id="KW-0007">Acetylation</keyword>
<keyword id="KW-0539">Nucleus</keyword>
<keyword id="KW-1185">Reference proteome</keyword>
<keyword id="KW-0804">Transcription</keyword>
<keyword id="KW-0805">Transcription regulation</keyword>